<protein>
    <recommendedName>
        <fullName>Uncharacterized protein YcdB</fullName>
    </recommendedName>
</protein>
<keyword id="KW-1185">Reference proteome</keyword>
<organism>
    <name type="scientific">Bacillus subtilis (strain 168)</name>
    <dbReference type="NCBI Taxonomy" id="224308"/>
    <lineage>
        <taxon>Bacteria</taxon>
        <taxon>Bacillati</taxon>
        <taxon>Bacillota</taxon>
        <taxon>Bacilli</taxon>
        <taxon>Bacillales</taxon>
        <taxon>Bacillaceae</taxon>
        <taxon>Bacillus</taxon>
    </lineage>
</organism>
<proteinExistence type="predicted"/>
<dbReference type="EMBL" id="AB000617">
    <property type="protein sequence ID" value="BAA22240.1"/>
    <property type="molecule type" value="Genomic_DNA"/>
</dbReference>
<dbReference type="EMBL" id="AL009126">
    <property type="protein sequence ID" value="CAB12073.1"/>
    <property type="molecule type" value="Genomic_DNA"/>
</dbReference>
<dbReference type="PIR" id="D69755">
    <property type="entry name" value="D69755"/>
</dbReference>
<dbReference type="RefSeq" id="NP_388161.1">
    <property type="nucleotide sequence ID" value="NC_000964.3"/>
</dbReference>
<dbReference type="RefSeq" id="WP_003246352.1">
    <property type="nucleotide sequence ID" value="NZ_OZ025638.1"/>
</dbReference>
<dbReference type="SMR" id="O34621"/>
<dbReference type="FunCoup" id="O34621">
    <property type="interactions" value="179"/>
</dbReference>
<dbReference type="STRING" id="224308.BSU02790"/>
<dbReference type="PaxDb" id="224308-BSU02790"/>
<dbReference type="EnsemblBacteria" id="CAB12073">
    <property type="protein sequence ID" value="CAB12073"/>
    <property type="gene ID" value="BSU_02790"/>
</dbReference>
<dbReference type="GeneID" id="938381"/>
<dbReference type="KEGG" id="bsu:BSU02790"/>
<dbReference type="PATRIC" id="fig|224308.179.peg.290"/>
<dbReference type="eggNOG" id="COG1595">
    <property type="taxonomic scope" value="Bacteria"/>
</dbReference>
<dbReference type="InParanoid" id="O34621"/>
<dbReference type="OrthoDB" id="2821454at2"/>
<dbReference type="BioCyc" id="BSUB:BSU02790-MONOMER"/>
<dbReference type="Proteomes" id="UP000001570">
    <property type="component" value="Chromosome"/>
</dbReference>
<dbReference type="InterPro" id="IPR032599">
    <property type="entry name" value="YcdB/YcdC_rep_domain"/>
</dbReference>
<dbReference type="Pfam" id="PF16244">
    <property type="entry name" value="DUF4901"/>
    <property type="match status" value="2"/>
</dbReference>
<sequence>MKGAAFVKKEGLKQKALEIGRVPTHLKLEIEDYGGDDKRAHFCWADPQDENTGIIVELGPDGELESLSRDIEPESGERLSEEKLEDIMRQFVETHHPGALSAFVREENDRAYGDKVRFSYVQMEAGLPLPMSGFMADVSLSGEIVYFRYYGEAGSIIKPKRVADVEEALAFIKKDVEFDLLFEVLHRSVYKNGDDQPHLVYEPEGRAITVPADLVQEEQAVDDDDDYREPESFPLPLFEGIREKADPDSMIGIENGFVKEREADLGDGRIGIVWRNPDDPVYQPADKSMDSWFKGRTHQVLKTIYNKETGKLEGVMSFMEKKGPLTVTLAECEKIALRFLFALFPNADQYFRIRYDEKDEEENAVAGFTFEAHCHGVPLRFGQIRICVSRQTGYITVYMGPDIDPNKLATIDPVPAISVEQAKSIFWQHFKVELGWEREYGDDEEHSYRLVYKPVYPHFIDAHTGEPVFSIW</sequence>
<accession>O34621</accession>
<name>YCDB_BACSU</name>
<comment type="similarity">
    <text evidence="1">To B.subtilis YcdC.</text>
</comment>
<gene>
    <name type="primary">ycdB</name>
    <name type="ordered locus">BSU02790</name>
</gene>
<reference key="1">
    <citation type="journal article" date="1997" name="Microbiology">
        <title>A 32 kb nucleotide sequence from the region of the lincomycin-resistance gene (22 degrees-25 degrees) of the Bacillus subtilis chromosome and identification of the site of the lin-2 mutation.</title>
        <authorList>
            <person name="Kumano M."/>
            <person name="Tamakoshi A."/>
            <person name="Yamane K."/>
        </authorList>
    </citation>
    <scope>NUCLEOTIDE SEQUENCE [GENOMIC DNA]</scope>
    <source>
        <strain>168</strain>
    </source>
</reference>
<reference key="2">
    <citation type="journal article" date="1997" name="Nature">
        <title>The complete genome sequence of the Gram-positive bacterium Bacillus subtilis.</title>
        <authorList>
            <person name="Kunst F."/>
            <person name="Ogasawara N."/>
            <person name="Moszer I."/>
            <person name="Albertini A.M."/>
            <person name="Alloni G."/>
            <person name="Azevedo V."/>
            <person name="Bertero M.G."/>
            <person name="Bessieres P."/>
            <person name="Bolotin A."/>
            <person name="Borchert S."/>
            <person name="Borriss R."/>
            <person name="Boursier L."/>
            <person name="Brans A."/>
            <person name="Braun M."/>
            <person name="Brignell S.C."/>
            <person name="Bron S."/>
            <person name="Brouillet S."/>
            <person name="Bruschi C.V."/>
            <person name="Caldwell B."/>
            <person name="Capuano V."/>
            <person name="Carter N.M."/>
            <person name="Choi S.-K."/>
            <person name="Codani J.-J."/>
            <person name="Connerton I.F."/>
            <person name="Cummings N.J."/>
            <person name="Daniel R.A."/>
            <person name="Denizot F."/>
            <person name="Devine K.M."/>
            <person name="Duesterhoeft A."/>
            <person name="Ehrlich S.D."/>
            <person name="Emmerson P.T."/>
            <person name="Entian K.-D."/>
            <person name="Errington J."/>
            <person name="Fabret C."/>
            <person name="Ferrari E."/>
            <person name="Foulger D."/>
            <person name="Fritz C."/>
            <person name="Fujita M."/>
            <person name="Fujita Y."/>
            <person name="Fuma S."/>
            <person name="Galizzi A."/>
            <person name="Galleron N."/>
            <person name="Ghim S.-Y."/>
            <person name="Glaser P."/>
            <person name="Goffeau A."/>
            <person name="Golightly E.J."/>
            <person name="Grandi G."/>
            <person name="Guiseppi G."/>
            <person name="Guy B.J."/>
            <person name="Haga K."/>
            <person name="Haiech J."/>
            <person name="Harwood C.R."/>
            <person name="Henaut A."/>
            <person name="Hilbert H."/>
            <person name="Holsappel S."/>
            <person name="Hosono S."/>
            <person name="Hullo M.-F."/>
            <person name="Itaya M."/>
            <person name="Jones L.-M."/>
            <person name="Joris B."/>
            <person name="Karamata D."/>
            <person name="Kasahara Y."/>
            <person name="Klaerr-Blanchard M."/>
            <person name="Klein C."/>
            <person name="Kobayashi Y."/>
            <person name="Koetter P."/>
            <person name="Koningstein G."/>
            <person name="Krogh S."/>
            <person name="Kumano M."/>
            <person name="Kurita K."/>
            <person name="Lapidus A."/>
            <person name="Lardinois S."/>
            <person name="Lauber J."/>
            <person name="Lazarevic V."/>
            <person name="Lee S.-M."/>
            <person name="Levine A."/>
            <person name="Liu H."/>
            <person name="Masuda S."/>
            <person name="Mauel C."/>
            <person name="Medigue C."/>
            <person name="Medina N."/>
            <person name="Mellado R.P."/>
            <person name="Mizuno M."/>
            <person name="Moestl D."/>
            <person name="Nakai S."/>
            <person name="Noback M."/>
            <person name="Noone D."/>
            <person name="O'Reilly M."/>
            <person name="Ogawa K."/>
            <person name="Ogiwara A."/>
            <person name="Oudega B."/>
            <person name="Park S.-H."/>
            <person name="Parro V."/>
            <person name="Pohl T.M."/>
            <person name="Portetelle D."/>
            <person name="Porwollik S."/>
            <person name="Prescott A.M."/>
            <person name="Presecan E."/>
            <person name="Pujic P."/>
            <person name="Purnelle B."/>
            <person name="Rapoport G."/>
            <person name="Rey M."/>
            <person name="Reynolds S."/>
            <person name="Rieger M."/>
            <person name="Rivolta C."/>
            <person name="Rocha E."/>
            <person name="Roche B."/>
            <person name="Rose M."/>
            <person name="Sadaie Y."/>
            <person name="Sato T."/>
            <person name="Scanlan E."/>
            <person name="Schleich S."/>
            <person name="Schroeter R."/>
            <person name="Scoffone F."/>
            <person name="Sekiguchi J."/>
            <person name="Sekowska A."/>
            <person name="Seror S.J."/>
            <person name="Serror P."/>
            <person name="Shin B.-S."/>
            <person name="Soldo B."/>
            <person name="Sorokin A."/>
            <person name="Tacconi E."/>
            <person name="Takagi T."/>
            <person name="Takahashi H."/>
            <person name="Takemaru K."/>
            <person name="Takeuchi M."/>
            <person name="Tamakoshi A."/>
            <person name="Tanaka T."/>
            <person name="Terpstra P."/>
            <person name="Tognoni A."/>
            <person name="Tosato V."/>
            <person name="Uchiyama S."/>
            <person name="Vandenbol M."/>
            <person name="Vannier F."/>
            <person name="Vassarotti A."/>
            <person name="Viari A."/>
            <person name="Wambutt R."/>
            <person name="Wedler E."/>
            <person name="Wedler H."/>
            <person name="Weitzenegger T."/>
            <person name="Winters P."/>
            <person name="Wipat A."/>
            <person name="Yamamoto H."/>
            <person name="Yamane K."/>
            <person name="Yasumoto K."/>
            <person name="Yata K."/>
            <person name="Yoshida K."/>
            <person name="Yoshikawa H.-F."/>
            <person name="Zumstein E."/>
            <person name="Yoshikawa H."/>
            <person name="Danchin A."/>
        </authorList>
    </citation>
    <scope>NUCLEOTIDE SEQUENCE [LARGE SCALE GENOMIC DNA]</scope>
    <source>
        <strain>168</strain>
    </source>
</reference>
<evidence type="ECO:0000305" key="1"/>
<feature type="chain" id="PRO_0000049472" description="Uncharacterized protein YcdB">
    <location>
        <begin position="1"/>
        <end position="472"/>
    </location>
</feature>